<name>PTP10_STYPL</name>
<reference key="1">
    <citation type="journal article" date="1991" name="Immunogenetics">
        <title>Protein tyrosine phosphatase domains from the protochordate Styela plicata.</title>
        <authorList>
            <person name="Matthews R.J."/>
            <person name="Flores E."/>
            <person name="Thomas M.L."/>
        </authorList>
    </citation>
    <scope>NUCLEOTIDE SEQUENCE [MRNA]</scope>
</reference>
<organism>
    <name type="scientific">Styela plicata</name>
    <name type="common">Wrinkled sea squirt</name>
    <name type="synonym">Ascidia plicata</name>
    <dbReference type="NCBI Taxonomy" id="7726"/>
    <lineage>
        <taxon>Eukaryota</taxon>
        <taxon>Metazoa</taxon>
        <taxon>Chordata</taxon>
        <taxon>Tunicata</taxon>
        <taxon>Ascidiacea</taxon>
        <taxon>Stolidobranchia</taxon>
        <taxon>Styelidae</taxon>
        <taxon>Styela</taxon>
    </lineage>
</organism>
<evidence type="ECO:0000250" key="1"/>
<evidence type="ECO:0000255" key="2">
    <source>
        <dbReference type="PROSITE-ProRule" id="PRU00160"/>
    </source>
</evidence>
<evidence type="ECO:0000255" key="3">
    <source>
        <dbReference type="PROSITE-ProRule" id="PRU10044"/>
    </source>
</evidence>
<evidence type="ECO:0000305" key="4"/>
<gene>
    <name type="primary">STY-10</name>
</gene>
<feature type="chain" id="PRO_0000094898" description="Tyrosine-protein phosphatase 10">
    <location>
        <begin position="1" status="less than"/>
        <end position="116" status="greater than"/>
    </location>
</feature>
<feature type="domain" description="Tyrosine-protein phosphatase" evidence="2">
    <location>
        <begin position="1" status="less than"/>
        <end position="116" status="greater than"/>
    </location>
</feature>
<feature type="binding site" evidence="1">
    <location>
        <position position="86"/>
    </location>
    <ligand>
        <name>substrate</name>
    </ligand>
</feature>
<feature type="non-terminal residue">
    <location>
        <position position="1"/>
    </location>
</feature>
<feature type="non-terminal residue">
    <location>
        <position position="116"/>
    </location>
</feature>
<keyword id="KW-0378">Hydrolase</keyword>
<keyword id="KW-0904">Protein phosphatase</keyword>
<dbReference type="EC" id="3.1.3.48"/>
<dbReference type="EMBL" id="M37995">
    <property type="protein sequence ID" value="AAA29828.1"/>
    <property type="molecule type" value="mRNA"/>
</dbReference>
<dbReference type="SMR" id="P28202"/>
<dbReference type="GO" id="GO:0004725">
    <property type="term" value="F:protein tyrosine phosphatase activity"/>
    <property type="evidence" value="ECO:0007669"/>
    <property type="project" value="UniProtKB-EC"/>
</dbReference>
<dbReference type="CDD" id="cd00047">
    <property type="entry name" value="PTPc"/>
    <property type="match status" value="1"/>
</dbReference>
<dbReference type="Gene3D" id="3.90.190.10">
    <property type="entry name" value="Protein tyrosine phosphatase superfamily"/>
    <property type="match status" value="1"/>
</dbReference>
<dbReference type="InterPro" id="IPR029021">
    <property type="entry name" value="Prot-tyrosine_phosphatase-like"/>
</dbReference>
<dbReference type="InterPro" id="IPR050348">
    <property type="entry name" value="Protein-Tyr_Phosphatase"/>
</dbReference>
<dbReference type="InterPro" id="IPR000242">
    <property type="entry name" value="PTP_cat"/>
</dbReference>
<dbReference type="PANTHER" id="PTHR19134">
    <property type="entry name" value="RECEPTOR-TYPE TYROSINE-PROTEIN PHOSPHATASE"/>
    <property type="match status" value="1"/>
</dbReference>
<dbReference type="PANTHER" id="PTHR19134:SF555">
    <property type="entry name" value="RECEPTOR-TYPE TYROSINE-PROTEIN PHOSPHATASE DELTA-LIKE ISOFORM X1"/>
    <property type="match status" value="1"/>
</dbReference>
<dbReference type="Pfam" id="PF00102">
    <property type="entry name" value="Y_phosphatase"/>
    <property type="match status" value="1"/>
</dbReference>
<dbReference type="SMART" id="SM00194">
    <property type="entry name" value="PTPc"/>
    <property type="match status" value="1"/>
</dbReference>
<dbReference type="SUPFAM" id="SSF52799">
    <property type="entry name" value="(Phosphotyrosine protein) phosphatases II"/>
    <property type="match status" value="1"/>
</dbReference>
<dbReference type="PROSITE" id="PS50055">
    <property type="entry name" value="TYR_PHOSPHATASE_PTP"/>
    <property type="match status" value="1"/>
</dbReference>
<comment type="catalytic activity">
    <reaction evidence="3">
        <text>O-phospho-L-tyrosyl-[protein] + H2O = L-tyrosyl-[protein] + phosphate</text>
        <dbReference type="Rhea" id="RHEA:10684"/>
        <dbReference type="Rhea" id="RHEA-COMP:10136"/>
        <dbReference type="Rhea" id="RHEA-COMP:20101"/>
        <dbReference type="ChEBI" id="CHEBI:15377"/>
        <dbReference type="ChEBI" id="CHEBI:43474"/>
        <dbReference type="ChEBI" id="CHEBI:46858"/>
        <dbReference type="ChEBI" id="CHEBI:61978"/>
        <dbReference type="EC" id="3.1.3.48"/>
    </reaction>
</comment>
<comment type="similarity">
    <text evidence="4">Belongs to the protein-tyrosine phosphatase family.</text>
</comment>
<accession>P28202</accession>
<proteinExistence type="evidence at transcript level"/>
<protein>
    <recommendedName>
        <fullName>Tyrosine-protein phosphatase 10</fullName>
        <ecNumber>3.1.3.48</ecNumber>
    </recommendedName>
</protein>
<sequence length="116" mass="13251">WRMVWEQNVSTVIMATNTEERKEPKCAKYWPSGDPQSYGDLMVVNLGENHLVDYTIRSFSVQRAQGDSTMSIKRNITQYHFTSWPDFGVPKSPSGILKFLRKIKHSSPTGYGPIVV</sequence>